<evidence type="ECO:0000255" key="1">
    <source>
        <dbReference type="HAMAP-Rule" id="MF_01350"/>
    </source>
</evidence>
<reference key="1">
    <citation type="submission" date="2006-01" db="EMBL/GenBank/DDBJ databases">
        <title>Complete sequence of Rhodopseudomonas palustris HaA2.</title>
        <authorList>
            <consortium name="US DOE Joint Genome Institute"/>
            <person name="Copeland A."/>
            <person name="Lucas S."/>
            <person name="Lapidus A."/>
            <person name="Barry K."/>
            <person name="Detter J.C."/>
            <person name="Glavina T."/>
            <person name="Hammon N."/>
            <person name="Israni S."/>
            <person name="Pitluck S."/>
            <person name="Chain P."/>
            <person name="Malfatti S."/>
            <person name="Shin M."/>
            <person name="Vergez L."/>
            <person name="Schmutz J."/>
            <person name="Larimer F."/>
            <person name="Land M."/>
            <person name="Hauser L."/>
            <person name="Pelletier D.A."/>
            <person name="Kyrpides N."/>
            <person name="Anderson I."/>
            <person name="Oda Y."/>
            <person name="Harwood C.S."/>
            <person name="Richardson P."/>
        </authorList>
    </citation>
    <scope>NUCLEOTIDE SEQUENCE [LARGE SCALE GENOMIC DNA]</scope>
    <source>
        <strain>HaA2</strain>
    </source>
</reference>
<comment type="function">
    <text evidence="1">NDH-1 shuttles electrons from NADH, via FMN and iron-sulfur (Fe-S) centers, to quinones in the respiratory chain. The immediate electron acceptor for the enzyme in this species is believed to be ubiquinone. Couples the redox reaction to proton translocation (for every two electrons transferred, four hydrogen ions are translocated across the cytoplasmic membrane), and thus conserves the redox energy in a proton gradient. This subunit may bind ubiquinone.</text>
</comment>
<comment type="catalytic activity">
    <reaction evidence="1">
        <text>a quinone + NADH + 5 H(+)(in) = a quinol + NAD(+) + 4 H(+)(out)</text>
        <dbReference type="Rhea" id="RHEA:57888"/>
        <dbReference type="ChEBI" id="CHEBI:15378"/>
        <dbReference type="ChEBI" id="CHEBI:24646"/>
        <dbReference type="ChEBI" id="CHEBI:57540"/>
        <dbReference type="ChEBI" id="CHEBI:57945"/>
        <dbReference type="ChEBI" id="CHEBI:132124"/>
    </reaction>
</comment>
<comment type="subunit">
    <text evidence="1">NDH-1 is composed of 14 different subunits. Subunits NuoA, H, J, K, L, M, N constitute the membrane sector of the complex.</text>
</comment>
<comment type="subcellular location">
    <subcellularLocation>
        <location evidence="1">Cell inner membrane</location>
        <topology evidence="1">Multi-pass membrane protein</topology>
    </subcellularLocation>
</comment>
<comment type="similarity">
    <text evidence="1">Belongs to the complex I subunit 1 family.</text>
</comment>
<name>NUOH1_RHOP2</name>
<proteinExistence type="inferred from homology"/>
<feature type="chain" id="PRO_0000244946" description="NADH-quinone oxidoreductase subunit H 1">
    <location>
        <begin position="1"/>
        <end position="319"/>
    </location>
</feature>
<feature type="transmembrane region" description="Helical" evidence="1">
    <location>
        <begin position="1"/>
        <end position="21"/>
    </location>
</feature>
<feature type="transmembrane region" description="Helical" evidence="1">
    <location>
        <begin position="77"/>
        <end position="97"/>
    </location>
</feature>
<feature type="transmembrane region" description="Helical" evidence="1">
    <location>
        <begin position="107"/>
        <end position="127"/>
    </location>
</feature>
<feature type="transmembrane region" description="Helical" evidence="1">
    <location>
        <begin position="147"/>
        <end position="167"/>
    </location>
</feature>
<feature type="transmembrane region" description="Helical" evidence="1">
    <location>
        <begin position="179"/>
        <end position="199"/>
    </location>
</feature>
<feature type="transmembrane region" description="Helical" evidence="1">
    <location>
        <begin position="214"/>
        <end position="234"/>
    </location>
</feature>
<feature type="transmembrane region" description="Helical" evidence="1">
    <location>
        <begin position="238"/>
        <end position="258"/>
    </location>
</feature>
<feature type="transmembrane region" description="Helical" evidence="1">
    <location>
        <begin position="262"/>
        <end position="282"/>
    </location>
</feature>
<feature type="transmembrane region" description="Helical" evidence="1">
    <location>
        <begin position="293"/>
        <end position="313"/>
    </location>
</feature>
<gene>
    <name evidence="1" type="primary">nuoH1</name>
    <name type="ordered locus">RPB_1353</name>
</gene>
<accession>Q2J0E7</accession>
<keyword id="KW-0997">Cell inner membrane</keyword>
<keyword id="KW-1003">Cell membrane</keyword>
<keyword id="KW-0472">Membrane</keyword>
<keyword id="KW-0520">NAD</keyword>
<keyword id="KW-0874">Quinone</keyword>
<keyword id="KW-1185">Reference proteome</keyword>
<keyword id="KW-1278">Translocase</keyword>
<keyword id="KW-0812">Transmembrane</keyword>
<keyword id="KW-1133">Transmembrane helix</keyword>
<keyword id="KW-0830">Ubiquinone</keyword>
<protein>
    <recommendedName>
        <fullName evidence="1">NADH-quinone oxidoreductase subunit H 1</fullName>
        <ecNumber evidence="1">7.1.1.-</ecNumber>
    </recommendedName>
    <alternativeName>
        <fullName evidence="1">NADH dehydrogenase I subunit H 1</fullName>
    </alternativeName>
    <alternativeName>
        <fullName evidence="1">NDH-1 subunit H 1</fullName>
    </alternativeName>
</protein>
<sequence>MIGLIITAIISAVLIMALLVVAGTFTWVERRLLGFVQERYGPNRVGPFGSLQWVADTVKILTKEDRPPPGADKLTYILAPAIAATPVLAGFGVVAFGDGLVLAPVDVGVLFLLGMMGLTAYAAMLGAWASNNRFSMMGGMRAAAQMLAYEVFLGLSLMGAVMLAGSLSMHAIVEAQRDVWFVVLQPLGAALFCIAGVAAAHRLPFDLPESENDLVAGFITEYTGMSFGLFFLGEYLAVLLVSALAVTLFFGGWLGPWLPGPIWFGLKTAVIAVVFVWLRATLPRPRYDQLLGFAWKIALPLSLLNLLLTGIVVVARSAP</sequence>
<organism>
    <name type="scientific">Rhodopseudomonas palustris (strain HaA2)</name>
    <dbReference type="NCBI Taxonomy" id="316058"/>
    <lineage>
        <taxon>Bacteria</taxon>
        <taxon>Pseudomonadati</taxon>
        <taxon>Pseudomonadota</taxon>
        <taxon>Alphaproteobacteria</taxon>
        <taxon>Hyphomicrobiales</taxon>
        <taxon>Nitrobacteraceae</taxon>
        <taxon>Rhodopseudomonas</taxon>
    </lineage>
</organism>
<dbReference type="EC" id="7.1.1.-" evidence="1"/>
<dbReference type="EMBL" id="CP000250">
    <property type="protein sequence ID" value="ABD06063.1"/>
    <property type="molecule type" value="Genomic_DNA"/>
</dbReference>
<dbReference type="RefSeq" id="WP_011440251.1">
    <property type="nucleotide sequence ID" value="NC_007778.1"/>
</dbReference>
<dbReference type="SMR" id="Q2J0E7"/>
<dbReference type="STRING" id="316058.RPB_1353"/>
<dbReference type="KEGG" id="rpb:RPB_1353"/>
<dbReference type="eggNOG" id="COG1005">
    <property type="taxonomic scope" value="Bacteria"/>
</dbReference>
<dbReference type="HOGENOM" id="CLU_015134_0_1_5"/>
<dbReference type="OrthoDB" id="9803734at2"/>
<dbReference type="Proteomes" id="UP000008809">
    <property type="component" value="Chromosome"/>
</dbReference>
<dbReference type="GO" id="GO:0005886">
    <property type="term" value="C:plasma membrane"/>
    <property type="evidence" value="ECO:0007669"/>
    <property type="project" value="UniProtKB-SubCell"/>
</dbReference>
<dbReference type="GO" id="GO:0003954">
    <property type="term" value="F:NADH dehydrogenase activity"/>
    <property type="evidence" value="ECO:0007669"/>
    <property type="project" value="TreeGrafter"/>
</dbReference>
<dbReference type="GO" id="GO:0016655">
    <property type="term" value="F:oxidoreductase activity, acting on NAD(P)H, quinone or similar compound as acceptor"/>
    <property type="evidence" value="ECO:0007669"/>
    <property type="project" value="UniProtKB-UniRule"/>
</dbReference>
<dbReference type="GO" id="GO:0048038">
    <property type="term" value="F:quinone binding"/>
    <property type="evidence" value="ECO:0007669"/>
    <property type="project" value="UniProtKB-KW"/>
</dbReference>
<dbReference type="GO" id="GO:0009060">
    <property type="term" value="P:aerobic respiration"/>
    <property type="evidence" value="ECO:0007669"/>
    <property type="project" value="TreeGrafter"/>
</dbReference>
<dbReference type="HAMAP" id="MF_01350">
    <property type="entry name" value="NDH1_NuoH"/>
    <property type="match status" value="1"/>
</dbReference>
<dbReference type="InterPro" id="IPR001694">
    <property type="entry name" value="NADH_UbQ_OxRdtase_su1/FPO"/>
</dbReference>
<dbReference type="InterPro" id="IPR018086">
    <property type="entry name" value="NADH_UbQ_OxRdtase_su1_CS"/>
</dbReference>
<dbReference type="NCBIfam" id="NF004740">
    <property type="entry name" value="PRK06076.1-1"/>
    <property type="match status" value="1"/>
</dbReference>
<dbReference type="NCBIfam" id="NF004741">
    <property type="entry name" value="PRK06076.1-2"/>
    <property type="match status" value="1"/>
</dbReference>
<dbReference type="PANTHER" id="PTHR11432">
    <property type="entry name" value="NADH DEHYDROGENASE SUBUNIT 1"/>
    <property type="match status" value="1"/>
</dbReference>
<dbReference type="PANTHER" id="PTHR11432:SF3">
    <property type="entry name" value="NADH-UBIQUINONE OXIDOREDUCTASE CHAIN 1"/>
    <property type="match status" value="1"/>
</dbReference>
<dbReference type="Pfam" id="PF00146">
    <property type="entry name" value="NADHdh"/>
    <property type="match status" value="1"/>
</dbReference>
<dbReference type="PROSITE" id="PS00668">
    <property type="entry name" value="COMPLEX1_ND1_2"/>
    <property type="match status" value="1"/>
</dbReference>